<evidence type="ECO:0000255" key="1">
    <source>
        <dbReference type="HAMAP-Rule" id="MF_01393"/>
    </source>
</evidence>
<comment type="function">
    <text evidence="1">Key component of the proton channel; it plays a direct role in the translocation of protons across the membrane.</text>
</comment>
<comment type="subunit">
    <text evidence="1">F-type ATPases have 2 components, CF(1) - the catalytic core - and CF(0) - the membrane proton channel. CF(1) has five subunits: alpha(3), beta(3), gamma(1), delta(1), epsilon(1). CF(0) has three main subunits: a(1), b(2) and c(9-12). The alpha and beta chains form an alternating ring which encloses part of the gamma chain. CF(1) is attached to CF(0) by a central stalk formed by the gamma and epsilon chains, while a peripheral stalk is formed by the delta and b chains.</text>
</comment>
<comment type="subcellular location">
    <subcellularLocation>
        <location evidence="1">Cell membrane</location>
        <topology evidence="1">Multi-pass membrane protein</topology>
    </subcellularLocation>
</comment>
<comment type="similarity">
    <text evidence="1">Belongs to the ATPase A chain family.</text>
</comment>
<name>ATP6_MYCLE</name>
<gene>
    <name evidence="1" type="primary">atpB</name>
    <name type="ordered locus">ML1139</name>
</gene>
<organism>
    <name type="scientific">Mycobacterium leprae (strain TN)</name>
    <dbReference type="NCBI Taxonomy" id="272631"/>
    <lineage>
        <taxon>Bacteria</taxon>
        <taxon>Bacillati</taxon>
        <taxon>Actinomycetota</taxon>
        <taxon>Actinomycetes</taxon>
        <taxon>Mycobacteriales</taxon>
        <taxon>Mycobacteriaceae</taxon>
        <taxon>Mycobacterium</taxon>
    </lineage>
</organism>
<sequence>MTETILSGGQIEVGEHHTTTWFGMTVNTDTVLSTAIAAAIVIALAFFLRTKVNSTGVPCGMQLFWEAITVQMRTQIESAIGMRIAPFVLPLAVTIFVFILISNWLSVLPLQYTNADGHTTEVLSSAAADINYVLALAFFVFVCYHLAGIWRRGIVGHPVAVLKGHVAFLAPINLVEEITKPISLSLRLFGNIFAGGILVTLIALFPPYIMWAPNAIWKSFDLFVGAIQAFIFSILTILYFSQAMEVEDHHD</sequence>
<feature type="chain" id="PRO_0000082061" description="ATP synthase subunit a">
    <location>
        <begin position="1"/>
        <end position="251"/>
    </location>
</feature>
<feature type="transmembrane region" description="Helical" evidence="1">
    <location>
        <begin position="28"/>
        <end position="48"/>
    </location>
</feature>
<feature type="transmembrane region" description="Helical" evidence="1">
    <location>
        <begin position="84"/>
        <end position="104"/>
    </location>
</feature>
<feature type="transmembrane region" description="Helical" evidence="1">
    <location>
        <begin position="130"/>
        <end position="150"/>
    </location>
</feature>
<feature type="transmembrane region" description="Helical" evidence="1">
    <location>
        <begin position="192"/>
        <end position="212"/>
    </location>
</feature>
<feature type="transmembrane region" description="Helical" evidence="1">
    <location>
        <begin position="220"/>
        <end position="240"/>
    </location>
</feature>
<keyword id="KW-0066">ATP synthesis</keyword>
<keyword id="KW-1003">Cell membrane</keyword>
<keyword id="KW-0138">CF(0)</keyword>
<keyword id="KW-0375">Hydrogen ion transport</keyword>
<keyword id="KW-0406">Ion transport</keyword>
<keyword id="KW-0472">Membrane</keyword>
<keyword id="KW-1185">Reference proteome</keyword>
<keyword id="KW-0812">Transmembrane</keyword>
<keyword id="KW-1133">Transmembrane helix</keyword>
<keyword id="KW-0813">Transport</keyword>
<accession>P45829</accession>
<reference key="1">
    <citation type="submission" date="1994-09" db="EMBL/GenBank/DDBJ databases">
        <authorList>
            <person name="Smith D.R."/>
            <person name="Robison K."/>
        </authorList>
    </citation>
    <scope>NUCLEOTIDE SEQUENCE [GENOMIC DNA]</scope>
</reference>
<reference key="2">
    <citation type="journal article" date="2001" name="Nature">
        <title>Massive gene decay in the leprosy bacillus.</title>
        <authorList>
            <person name="Cole S.T."/>
            <person name="Eiglmeier K."/>
            <person name="Parkhill J."/>
            <person name="James K.D."/>
            <person name="Thomson N.R."/>
            <person name="Wheeler P.R."/>
            <person name="Honore N."/>
            <person name="Garnier T."/>
            <person name="Churcher C.M."/>
            <person name="Harris D.E."/>
            <person name="Mungall K.L."/>
            <person name="Basham D."/>
            <person name="Brown D."/>
            <person name="Chillingworth T."/>
            <person name="Connor R."/>
            <person name="Davies R.M."/>
            <person name="Devlin K."/>
            <person name="Duthoy S."/>
            <person name="Feltwell T."/>
            <person name="Fraser A."/>
            <person name="Hamlin N."/>
            <person name="Holroyd S."/>
            <person name="Hornsby T."/>
            <person name="Jagels K."/>
            <person name="Lacroix C."/>
            <person name="Maclean J."/>
            <person name="Moule S."/>
            <person name="Murphy L.D."/>
            <person name="Oliver K."/>
            <person name="Quail M.A."/>
            <person name="Rajandream M.A."/>
            <person name="Rutherford K.M."/>
            <person name="Rutter S."/>
            <person name="Seeger K."/>
            <person name="Simon S."/>
            <person name="Simmonds M."/>
            <person name="Skelton J."/>
            <person name="Squares R."/>
            <person name="Squares S."/>
            <person name="Stevens K."/>
            <person name="Taylor K."/>
            <person name="Whitehead S."/>
            <person name="Woodward J.R."/>
            <person name="Barrell B.G."/>
        </authorList>
    </citation>
    <scope>NUCLEOTIDE SEQUENCE [LARGE SCALE GENOMIC DNA]</scope>
    <source>
        <strain>TN</strain>
    </source>
</reference>
<protein>
    <recommendedName>
        <fullName evidence="1">ATP synthase subunit a</fullName>
    </recommendedName>
    <alternativeName>
        <fullName evidence="1">ATP synthase F0 sector subunit a</fullName>
    </alternativeName>
    <alternativeName>
        <fullName evidence="1">F-ATPase subunit 6</fullName>
    </alternativeName>
</protein>
<proteinExistence type="inferred from homology"/>
<dbReference type="EMBL" id="U15186">
    <property type="protein sequence ID" value="AAA63110.1"/>
    <property type="molecule type" value="Genomic_DNA"/>
</dbReference>
<dbReference type="EMBL" id="AL583920">
    <property type="protein sequence ID" value="CAC31520.1"/>
    <property type="molecule type" value="Genomic_DNA"/>
</dbReference>
<dbReference type="PIR" id="T09980">
    <property type="entry name" value="T09980"/>
</dbReference>
<dbReference type="RefSeq" id="NP_301833.1">
    <property type="nucleotide sequence ID" value="NC_002677.1"/>
</dbReference>
<dbReference type="RefSeq" id="WP_010908157.1">
    <property type="nucleotide sequence ID" value="NC_002677.1"/>
</dbReference>
<dbReference type="SMR" id="P45829"/>
<dbReference type="STRING" id="272631.gene:17574966"/>
<dbReference type="KEGG" id="mle:ML1139"/>
<dbReference type="PATRIC" id="fig|272631.5.peg.2061"/>
<dbReference type="Leproma" id="ML1139"/>
<dbReference type="eggNOG" id="COG0356">
    <property type="taxonomic scope" value="Bacteria"/>
</dbReference>
<dbReference type="HOGENOM" id="CLU_041018_2_3_11"/>
<dbReference type="OrthoDB" id="9809130at2"/>
<dbReference type="Proteomes" id="UP000000806">
    <property type="component" value="Chromosome"/>
</dbReference>
<dbReference type="GO" id="GO:0005886">
    <property type="term" value="C:plasma membrane"/>
    <property type="evidence" value="ECO:0007669"/>
    <property type="project" value="UniProtKB-SubCell"/>
</dbReference>
<dbReference type="GO" id="GO:0045259">
    <property type="term" value="C:proton-transporting ATP synthase complex"/>
    <property type="evidence" value="ECO:0007669"/>
    <property type="project" value="UniProtKB-KW"/>
</dbReference>
<dbReference type="GO" id="GO:0046933">
    <property type="term" value="F:proton-transporting ATP synthase activity, rotational mechanism"/>
    <property type="evidence" value="ECO:0007669"/>
    <property type="project" value="UniProtKB-UniRule"/>
</dbReference>
<dbReference type="GO" id="GO:0042777">
    <property type="term" value="P:proton motive force-driven plasma membrane ATP synthesis"/>
    <property type="evidence" value="ECO:0007669"/>
    <property type="project" value="TreeGrafter"/>
</dbReference>
<dbReference type="CDD" id="cd00310">
    <property type="entry name" value="ATP-synt_Fo_a_6"/>
    <property type="match status" value="1"/>
</dbReference>
<dbReference type="Gene3D" id="1.20.120.220">
    <property type="entry name" value="ATP synthase, F0 complex, subunit A"/>
    <property type="match status" value="1"/>
</dbReference>
<dbReference type="HAMAP" id="MF_01393">
    <property type="entry name" value="ATP_synth_a_bact"/>
    <property type="match status" value="1"/>
</dbReference>
<dbReference type="InterPro" id="IPR045082">
    <property type="entry name" value="ATP_syn_F0_a_bact/chloroplast"/>
</dbReference>
<dbReference type="InterPro" id="IPR000568">
    <property type="entry name" value="ATP_synth_F0_asu"/>
</dbReference>
<dbReference type="InterPro" id="IPR023011">
    <property type="entry name" value="ATP_synth_F0_asu_AS"/>
</dbReference>
<dbReference type="InterPro" id="IPR035908">
    <property type="entry name" value="F0_ATP_A_sf"/>
</dbReference>
<dbReference type="NCBIfam" id="TIGR01131">
    <property type="entry name" value="ATP_synt_6_or_A"/>
    <property type="match status" value="1"/>
</dbReference>
<dbReference type="PANTHER" id="PTHR42823">
    <property type="entry name" value="ATP SYNTHASE SUBUNIT A, CHLOROPLASTIC"/>
    <property type="match status" value="1"/>
</dbReference>
<dbReference type="PANTHER" id="PTHR42823:SF3">
    <property type="entry name" value="ATP SYNTHASE SUBUNIT A, CHLOROPLASTIC"/>
    <property type="match status" value="1"/>
</dbReference>
<dbReference type="Pfam" id="PF00119">
    <property type="entry name" value="ATP-synt_A"/>
    <property type="match status" value="1"/>
</dbReference>
<dbReference type="PRINTS" id="PR00123">
    <property type="entry name" value="ATPASEA"/>
</dbReference>
<dbReference type="SUPFAM" id="SSF81336">
    <property type="entry name" value="F1F0 ATP synthase subunit A"/>
    <property type="match status" value="1"/>
</dbReference>
<dbReference type="PROSITE" id="PS00449">
    <property type="entry name" value="ATPASE_A"/>
    <property type="match status" value="1"/>
</dbReference>